<organism>
    <name type="scientific">Passalora fulva</name>
    <name type="common">Tomato leaf mold</name>
    <name type="synonym">Cladosporium fulvum</name>
    <dbReference type="NCBI Taxonomy" id="5499"/>
    <lineage>
        <taxon>Eukaryota</taxon>
        <taxon>Fungi</taxon>
        <taxon>Dikarya</taxon>
        <taxon>Ascomycota</taxon>
        <taxon>Pezizomycotina</taxon>
        <taxon>Dothideomycetes</taxon>
        <taxon>Dothideomycetidae</taxon>
        <taxon>Mycosphaerellales</taxon>
        <taxon>Mycosphaerellaceae</taxon>
        <taxon>Fulvia</taxon>
    </lineage>
</organism>
<proteinExistence type="evidence at transcript level"/>
<feature type="chain" id="PRO_0000445891" description="Oxidoreductase claN">
    <location>
        <begin position="1"/>
        <end position="218"/>
    </location>
</feature>
<feature type="active site" description="Proton donor" evidence="2">
    <location>
        <position position="134"/>
    </location>
</feature>
<feature type="active site" description="Proton acceptor" evidence="3">
    <location>
        <position position="148"/>
    </location>
</feature>
<feature type="active site" description="Lowers pKa of active site Tyr" evidence="2">
    <location>
        <position position="152"/>
    </location>
</feature>
<feature type="binding site" evidence="1">
    <location>
        <position position="38"/>
    </location>
    <ligand>
        <name>NADP(+)</name>
        <dbReference type="ChEBI" id="CHEBI:58349"/>
    </ligand>
</feature>
<feature type="binding site" evidence="1">
    <location>
        <position position="57"/>
    </location>
    <ligand>
        <name>NADP(+)</name>
        <dbReference type="ChEBI" id="CHEBI:58349"/>
    </ligand>
</feature>
<feature type="binding site" evidence="2">
    <location>
        <position position="82"/>
    </location>
    <ligand>
        <name>NADP(+)</name>
        <dbReference type="ChEBI" id="CHEBI:58349"/>
    </ligand>
</feature>
<feature type="binding site" evidence="2">
    <location>
        <position position="148"/>
    </location>
    <ligand>
        <name>NADP(+)</name>
        <dbReference type="ChEBI" id="CHEBI:58349"/>
    </ligand>
</feature>
<feature type="binding site" evidence="2">
    <location>
        <position position="152"/>
    </location>
    <ligand>
        <name>NADP(+)</name>
        <dbReference type="ChEBI" id="CHEBI:58349"/>
    </ligand>
</feature>
<feature type="binding site" evidence="1">
    <location>
        <position position="183"/>
    </location>
    <ligand>
        <name>NADP(+)</name>
        <dbReference type="ChEBI" id="CHEBI:58349"/>
    </ligand>
</feature>
<evidence type="ECO:0000250" key="1">
    <source>
        <dbReference type="UniProtKB" id="L0E2Z4"/>
    </source>
</evidence>
<evidence type="ECO:0000250" key="2">
    <source>
        <dbReference type="UniProtKB" id="O93868"/>
    </source>
</evidence>
<evidence type="ECO:0000255" key="3">
    <source>
        <dbReference type="PROSITE-ProRule" id="PRU10001"/>
    </source>
</evidence>
<evidence type="ECO:0000269" key="4">
    <source>
    </source>
</evidence>
<evidence type="ECO:0000269" key="5">
    <source>
    </source>
</evidence>
<evidence type="ECO:0000269" key="6">
    <source>
    </source>
</evidence>
<evidence type="ECO:0000269" key="7">
    <source>
    </source>
</evidence>
<evidence type="ECO:0000303" key="8">
    <source>
    </source>
</evidence>
<evidence type="ECO:0000305" key="9"/>
<evidence type="ECO:0000305" key="10">
    <source>
    </source>
</evidence>
<accession>P0CU71</accession>
<protein>
    <recommendedName>
        <fullName evidence="8">Oxidoreductase claN</fullName>
        <ecNumber evidence="10">1.-.-.-</ecNumber>
    </recommendedName>
    <alternativeName>
        <fullName evidence="8">Cladofulvin biosynthesis cluster protein N</fullName>
    </alternativeName>
</protein>
<reference key="1">
    <citation type="journal article" date="2014" name="Mol. Microbiol.">
        <title>Functional analysis of the conserved transcriptional regulator CfWor1 in Cladosporium fulvum reveals diverse roles in the virulence of plant pathogenic fungi.</title>
        <authorList>
            <person name="Okmen B."/>
            <person name="Collemare J."/>
            <person name="Griffiths S."/>
            <person name="van der Burgt A."/>
            <person name="Cox R."/>
            <person name="de Wit P.J."/>
        </authorList>
    </citation>
    <scope>INDUCTION</scope>
</reference>
<reference key="2">
    <citation type="journal article" date="2014" name="PLoS ONE">
        <title>Secondary metabolism and biotrophic lifestyle in the tomato pathogen Cladosporium fulvum.</title>
        <authorList>
            <person name="Collemare J."/>
            <person name="Griffiths S."/>
            <person name="Iida Y."/>
            <person name="Karimi Jashni M."/>
            <person name="Battaglia E."/>
            <person name="Cox R.J."/>
            <person name="de Wit P.J."/>
        </authorList>
    </citation>
    <scope>IDENTIFICATION</scope>
    <scope>FUNCTION</scope>
    <scope>INDUCTION</scope>
    <scope>PATHWAY</scope>
</reference>
<reference key="3">
    <citation type="journal article" date="2016" name="Proc. Natl. Acad. Sci. U.S.A.">
        <title>Elucidation of cladofulvin biosynthesis reveals a cytochrome P450 monooxygenase required for anthraquinone dimerization.</title>
        <authorList>
            <person name="Griffiths S."/>
            <person name="Mesarich C.H."/>
            <person name="Saccomanno B."/>
            <person name="Vaisberg A."/>
            <person name="De Wit P.J."/>
            <person name="Cox R."/>
            <person name="Collemare J."/>
        </authorList>
    </citation>
    <scope>INDUCTION</scope>
    <scope>FUNCTION</scope>
</reference>
<reference key="4">
    <citation type="journal article" date="2018" name="Mol. Plant Pathol.">
        <title>Down-regulation of cladofulvin biosynthesis is required for biotrophic growth of Cladosporium fulvum on tomato.</title>
        <authorList>
            <person name="Griffiths S."/>
            <person name="Mesarich C.H."/>
            <person name="Overdijk E.J.R."/>
            <person name="Saccomanno B."/>
            <person name="de Wit P.J.G.M."/>
            <person name="Collemare J."/>
        </authorList>
    </citation>
    <scope>INDUCTION</scope>
</reference>
<keyword id="KW-0521">NADP</keyword>
<keyword id="KW-0560">Oxidoreductase</keyword>
<comment type="function">
    <text evidence="4 6">Oxidoreductase; part of the gene cluster that mediates the biosynthesis of the bianthraquinone cladofulvin, a conidial pigment not required for virulence but that plays a role in fitness and resistance to environmental stresses including UV light and low-temperature stress (PubMed:24465762, PubMed:27274078). The pathway begins with the synthesis of atrochrysone thioester by the polyketide synthase (PKS) claG. The atrochrysone carboxyl ACP thioesterase claF then breaks the thioester bond and releases the atrochrysone carboxylic acid from claG (PubMed:27274078). This compound is decarboxylated by claH to yield emodin, which is further converted to chrysophanol hydroquinone by the reductase claC and the dehydratase claB (PubMed:27274078). The cytochrome P450 monooxygenase claM then catalyzes the dimerization of nataloe-emodin to cladofulvin (PubMed:27274078).</text>
</comment>
<comment type="pathway">
    <text evidence="10">Pigment biosynthesis.</text>
</comment>
<comment type="induction">
    <text evidence="4 5 6 7">Expression is positively regulated by the transcriptional regulator wor1 (PubMed:24521437, PubMed:27274078). Expression is down-regulated during biotrophic growth within tomato leaves (PubMed:27997759). The expression is induced at later stages of infection when conidiophores emerge from the plant and produce conidia (PubMed:24465762).</text>
</comment>
<comment type="similarity">
    <text evidence="9">Belongs to the short-chain dehydrogenases/reductases (SDR) family.</text>
</comment>
<dbReference type="EC" id="1.-.-.-" evidence="10"/>
<dbReference type="SMR" id="P0CU71"/>
<dbReference type="OMA" id="KEDHCDV"/>
<dbReference type="GO" id="GO:0016491">
    <property type="term" value="F:oxidoreductase activity"/>
    <property type="evidence" value="ECO:0007669"/>
    <property type="project" value="UniProtKB-KW"/>
</dbReference>
<dbReference type="Gene3D" id="3.40.50.720">
    <property type="entry name" value="NAD(P)-binding Rossmann-like Domain"/>
    <property type="match status" value="1"/>
</dbReference>
<dbReference type="InterPro" id="IPR036291">
    <property type="entry name" value="NAD(P)-bd_dom_sf"/>
</dbReference>
<dbReference type="InterPro" id="IPR002347">
    <property type="entry name" value="SDR_fam"/>
</dbReference>
<dbReference type="InterPro" id="IPR051911">
    <property type="entry name" value="SDR_oxidoreductase"/>
</dbReference>
<dbReference type="PANTHER" id="PTHR43976">
    <property type="entry name" value="SHORT CHAIN DEHYDROGENASE"/>
    <property type="match status" value="1"/>
</dbReference>
<dbReference type="PANTHER" id="PTHR43976:SF16">
    <property type="entry name" value="SHORT-CHAIN DEHYDROGENASE_REDUCTASE FAMILY PROTEIN"/>
    <property type="match status" value="1"/>
</dbReference>
<dbReference type="Pfam" id="PF00106">
    <property type="entry name" value="adh_short"/>
    <property type="match status" value="1"/>
</dbReference>
<dbReference type="PRINTS" id="PR00081">
    <property type="entry name" value="GDHRDH"/>
</dbReference>
<dbReference type="PRINTS" id="PR00080">
    <property type="entry name" value="SDRFAMILY"/>
</dbReference>
<dbReference type="SUPFAM" id="SSF51735">
    <property type="entry name" value="NAD(P)-binding Rossmann-fold domains"/>
    <property type="match status" value="1"/>
</dbReference>
<name>CLAN_PASFU</name>
<gene>
    <name evidence="8" type="primary">claN</name>
    <name type="ORF">Clafu184399</name>
</gene>
<sequence>MSYTWLITRASSGRGAAIALAALEAGHKVIAGARNPAKASQVRPEIQNQGGTWLRLDDSTADVRHVIAKAAKEHGLNVLVNNAGGYALRGVLEDFSETELYQQMETNFFGPIRAIQGALPWSRAQKPGTIFNISSTSDITGFTGFSLYAASKAALEGASEALYGELALFGIRVLVVQPGASRTKFQSAGPRPAVSEACVGTTVDAILQRAVGMAAERR</sequence>